<protein>
    <recommendedName>
        <fullName evidence="1">Small ribosomal subunit protein uS2</fullName>
    </recommendedName>
    <alternativeName>
        <fullName evidence="2">30S ribosomal protein S2</fullName>
    </alternativeName>
</protein>
<feature type="chain" id="PRO_1000204897" description="Small ribosomal subunit protein uS2">
    <location>
        <begin position="1"/>
        <end position="250"/>
    </location>
</feature>
<keyword id="KW-0687">Ribonucleoprotein</keyword>
<keyword id="KW-0689">Ribosomal protein</keyword>
<dbReference type="EMBL" id="CP001635">
    <property type="protein sequence ID" value="ACS19224.1"/>
    <property type="molecule type" value="Genomic_DNA"/>
</dbReference>
<dbReference type="SMR" id="C5CKS0"/>
<dbReference type="STRING" id="543728.Vapar_2599"/>
<dbReference type="KEGG" id="vap:Vapar_2599"/>
<dbReference type="eggNOG" id="COG0052">
    <property type="taxonomic scope" value="Bacteria"/>
</dbReference>
<dbReference type="HOGENOM" id="CLU_040318_1_2_4"/>
<dbReference type="OrthoDB" id="9808036at2"/>
<dbReference type="GO" id="GO:0022627">
    <property type="term" value="C:cytosolic small ribosomal subunit"/>
    <property type="evidence" value="ECO:0007669"/>
    <property type="project" value="TreeGrafter"/>
</dbReference>
<dbReference type="GO" id="GO:0003735">
    <property type="term" value="F:structural constituent of ribosome"/>
    <property type="evidence" value="ECO:0007669"/>
    <property type="project" value="InterPro"/>
</dbReference>
<dbReference type="GO" id="GO:0006412">
    <property type="term" value="P:translation"/>
    <property type="evidence" value="ECO:0007669"/>
    <property type="project" value="UniProtKB-UniRule"/>
</dbReference>
<dbReference type="CDD" id="cd01425">
    <property type="entry name" value="RPS2"/>
    <property type="match status" value="1"/>
</dbReference>
<dbReference type="FunFam" id="1.10.287.610:FF:000001">
    <property type="entry name" value="30S ribosomal protein S2"/>
    <property type="match status" value="1"/>
</dbReference>
<dbReference type="Gene3D" id="3.40.50.10490">
    <property type="entry name" value="Glucose-6-phosphate isomerase like protein, domain 1"/>
    <property type="match status" value="1"/>
</dbReference>
<dbReference type="Gene3D" id="1.10.287.610">
    <property type="entry name" value="Helix hairpin bin"/>
    <property type="match status" value="1"/>
</dbReference>
<dbReference type="HAMAP" id="MF_00291_B">
    <property type="entry name" value="Ribosomal_uS2_B"/>
    <property type="match status" value="1"/>
</dbReference>
<dbReference type="InterPro" id="IPR001865">
    <property type="entry name" value="Ribosomal_uS2"/>
</dbReference>
<dbReference type="InterPro" id="IPR005706">
    <property type="entry name" value="Ribosomal_uS2_bac/mit/plastid"/>
</dbReference>
<dbReference type="InterPro" id="IPR018130">
    <property type="entry name" value="Ribosomal_uS2_CS"/>
</dbReference>
<dbReference type="InterPro" id="IPR023591">
    <property type="entry name" value="Ribosomal_uS2_flav_dom_sf"/>
</dbReference>
<dbReference type="NCBIfam" id="TIGR01011">
    <property type="entry name" value="rpsB_bact"/>
    <property type="match status" value="1"/>
</dbReference>
<dbReference type="PANTHER" id="PTHR12534">
    <property type="entry name" value="30S RIBOSOMAL PROTEIN S2 PROKARYOTIC AND ORGANELLAR"/>
    <property type="match status" value="1"/>
</dbReference>
<dbReference type="PANTHER" id="PTHR12534:SF0">
    <property type="entry name" value="SMALL RIBOSOMAL SUBUNIT PROTEIN US2M"/>
    <property type="match status" value="1"/>
</dbReference>
<dbReference type="Pfam" id="PF00318">
    <property type="entry name" value="Ribosomal_S2"/>
    <property type="match status" value="1"/>
</dbReference>
<dbReference type="PRINTS" id="PR00395">
    <property type="entry name" value="RIBOSOMALS2"/>
</dbReference>
<dbReference type="SUPFAM" id="SSF52313">
    <property type="entry name" value="Ribosomal protein S2"/>
    <property type="match status" value="1"/>
</dbReference>
<dbReference type="PROSITE" id="PS00962">
    <property type="entry name" value="RIBOSOMAL_S2_1"/>
    <property type="match status" value="1"/>
</dbReference>
<proteinExistence type="inferred from homology"/>
<accession>C5CKS0</accession>
<name>RS2_VARPS</name>
<reference key="1">
    <citation type="journal article" date="2011" name="J. Bacteriol.">
        <title>Complete genome sequence of the metabolically versatile plant growth-promoting endophyte, Variovorax paradoxus S110.</title>
        <authorList>
            <person name="Han J.I."/>
            <person name="Choi H.K."/>
            <person name="Lee S.W."/>
            <person name="Orwin P.M."/>
            <person name="Kim J."/>
            <person name="Laroe S.L."/>
            <person name="Kim T.G."/>
            <person name="O'Neil J."/>
            <person name="Leadbetter J.R."/>
            <person name="Lee S.Y."/>
            <person name="Hur C.G."/>
            <person name="Spain J.C."/>
            <person name="Ovchinnikova G."/>
            <person name="Goodwin L."/>
            <person name="Han C."/>
        </authorList>
    </citation>
    <scope>NUCLEOTIDE SEQUENCE [LARGE SCALE GENOMIC DNA]</scope>
    <source>
        <strain>S110</strain>
    </source>
</reference>
<gene>
    <name evidence="1" type="primary">rpsB</name>
    <name type="ordered locus">Vapar_2599</name>
</gene>
<comment type="similarity">
    <text evidence="1">Belongs to the universal ribosomal protein uS2 family.</text>
</comment>
<sequence>MSTTMREMLEAGVHFGHQTRFWNPKMAPFIFGHRNKIHIINLEKSLPMFQDAMKYAKQLTANRGTILMVGTKRQAREIVAAEARRAGVPFVDTRWLGGMLTNFKTVKTSIKRLKDMKAQQEAGLDSLSKKEQLTFTREIEKLEKDIGGIQDMTALPDAIFVIDVGFHKIAVAEAKKLGIPLIGVVDSNHSPEGIDYVIPGNDDSSKAVTLYARGIADAIIEGRNSATGDVVKAIAEGSDEFVEVEEGASA</sequence>
<organism>
    <name type="scientific">Variovorax paradoxus (strain S110)</name>
    <dbReference type="NCBI Taxonomy" id="543728"/>
    <lineage>
        <taxon>Bacteria</taxon>
        <taxon>Pseudomonadati</taxon>
        <taxon>Pseudomonadota</taxon>
        <taxon>Betaproteobacteria</taxon>
        <taxon>Burkholderiales</taxon>
        <taxon>Comamonadaceae</taxon>
        <taxon>Variovorax</taxon>
    </lineage>
</organism>
<evidence type="ECO:0000255" key="1">
    <source>
        <dbReference type="HAMAP-Rule" id="MF_00291"/>
    </source>
</evidence>
<evidence type="ECO:0000305" key="2"/>